<organism>
    <name type="scientific">Rickettsia prowazekii (strain Madrid E)</name>
    <dbReference type="NCBI Taxonomy" id="272947"/>
    <lineage>
        <taxon>Bacteria</taxon>
        <taxon>Pseudomonadati</taxon>
        <taxon>Pseudomonadota</taxon>
        <taxon>Alphaproteobacteria</taxon>
        <taxon>Rickettsiales</taxon>
        <taxon>Rickettsiaceae</taxon>
        <taxon>Rickettsieae</taxon>
        <taxon>Rickettsia</taxon>
        <taxon>typhus group</taxon>
    </lineage>
</organism>
<protein>
    <recommendedName>
        <fullName>Uncharacterized protein RP548</fullName>
    </recommendedName>
</protein>
<reference key="1">
    <citation type="journal article" date="1998" name="Nature">
        <title>The genome sequence of Rickettsia prowazekii and the origin of mitochondria.</title>
        <authorList>
            <person name="Andersson S.G.E."/>
            <person name="Zomorodipour A."/>
            <person name="Andersson J.O."/>
            <person name="Sicheritz-Ponten T."/>
            <person name="Alsmark U.C.M."/>
            <person name="Podowski R.M."/>
            <person name="Naeslund A.K."/>
            <person name="Eriksson A.-S."/>
            <person name="Winkler H.H."/>
            <person name="Kurland C.G."/>
        </authorList>
    </citation>
    <scope>NUCLEOTIDE SEQUENCE [LARGE SCALE GENOMIC DNA]</scope>
    <source>
        <strain>Madrid E</strain>
    </source>
</reference>
<keyword id="KW-1185">Reference proteome</keyword>
<accession>Q9ZD02</accession>
<gene>
    <name type="ordered locus">RP548</name>
</gene>
<name>Y548_RICPR</name>
<dbReference type="EMBL" id="AJ235272">
    <property type="protein sequence ID" value="CAA14997.1"/>
    <property type="molecule type" value="Genomic_DNA"/>
</dbReference>
<dbReference type="PIR" id="C71659">
    <property type="entry name" value="C71659"/>
</dbReference>
<dbReference type="SMR" id="Q9ZD02"/>
<dbReference type="STRING" id="272947.gene:17555628"/>
<dbReference type="EnsemblBacteria" id="CAA14997">
    <property type="protein sequence ID" value="CAA14997"/>
    <property type="gene ID" value="CAA14997"/>
</dbReference>
<dbReference type="KEGG" id="rpr:RP548"/>
<dbReference type="HOGENOM" id="CLU_2107158_0_0_5"/>
<dbReference type="Proteomes" id="UP000002480">
    <property type="component" value="Chromosome"/>
</dbReference>
<dbReference type="GO" id="GO:0006310">
    <property type="term" value="P:DNA recombination"/>
    <property type="evidence" value="ECO:0007669"/>
    <property type="project" value="InterPro"/>
</dbReference>
<dbReference type="GO" id="GO:0006281">
    <property type="term" value="P:DNA repair"/>
    <property type="evidence" value="ECO:0007669"/>
    <property type="project" value="InterPro"/>
</dbReference>
<dbReference type="Gene3D" id="2.40.50.140">
    <property type="entry name" value="Nucleic acid-binding proteins"/>
    <property type="match status" value="1"/>
</dbReference>
<dbReference type="InterPro" id="IPR022572">
    <property type="entry name" value="DNA_rep/recomb_RecO_N"/>
</dbReference>
<dbReference type="InterPro" id="IPR012340">
    <property type="entry name" value="NA-bd_OB-fold"/>
</dbReference>
<dbReference type="InterPro" id="IPR003717">
    <property type="entry name" value="RecO"/>
</dbReference>
<dbReference type="NCBIfam" id="TIGR00613">
    <property type="entry name" value="reco"/>
    <property type="match status" value="1"/>
</dbReference>
<dbReference type="Pfam" id="PF11967">
    <property type="entry name" value="RecO_N"/>
    <property type="match status" value="1"/>
</dbReference>
<proteinExistence type="predicted"/>
<sequence>MNIKDIGVIISKKPLKENTFIIRVFTKNHGLYSGVIKESSKKNKFIYQEGNIVDFLWKARLHEHIGIAKCELIKSYTGYFIINKAKLYAFNSVISLIQELFHEREEHSIFFFISN</sequence>
<feature type="chain" id="PRO_0000101392" description="Uncharacterized protein RP548">
    <location>
        <begin position="1"/>
        <end position="115"/>
    </location>
</feature>